<accession>B7N2F3</accession>
<protein>
    <recommendedName>
        <fullName evidence="1">Xaa-Pro dipeptidase</fullName>
        <shortName evidence="1">X-Pro dipeptidase</shortName>
        <ecNumber evidence="1">3.4.13.9</ecNumber>
    </recommendedName>
    <alternativeName>
        <fullName evidence="1">Imidodipeptidase</fullName>
    </alternativeName>
    <alternativeName>
        <fullName evidence="1">Proline dipeptidase</fullName>
        <shortName evidence="1">Prolidase</shortName>
    </alternativeName>
</protein>
<dbReference type="EC" id="3.4.13.9" evidence="1"/>
<dbReference type="EMBL" id="CU928162">
    <property type="protein sequence ID" value="CAR10524.1"/>
    <property type="molecule type" value="Genomic_DNA"/>
</dbReference>
<dbReference type="RefSeq" id="WP_000444547.1">
    <property type="nucleotide sequence ID" value="NC_011745.1"/>
</dbReference>
<dbReference type="SMR" id="B7N2F3"/>
<dbReference type="MEROPS" id="M24.003"/>
<dbReference type="KEGG" id="ecq:ECED1_4549"/>
<dbReference type="HOGENOM" id="CLU_050675_0_0_6"/>
<dbReference type="Proteomes" id="UP000000748">
    <property type="component" value="Chromosome"/>
</dbReference>
<dbReference type="GO" id="GO:0005829">
    <property type="term" value="C:cytosol"/>
    <property type="evidence" value="ECO:0007669"/>
    <property type="project" value="TreeGrafter"/>
</dbReference>
<dbReference type="GO" id="GO:0004177">
    <property type="term" value="F:aminopeptidase activity"/>
    <property type="evidence" value="ECO:0007669"/>
    <property type="project" value="TreeGrafter"/>
</dbReference>
<dbReference type="GO" id="GO:0046872">
    <property type="term" value="F:metal ion binding"/>
    <property type="evidence" value="ECO:0007669"/>
    <property type="project" value="UniProtKB-KW"/>
</dbReference>
<dbReference type="GO" id="GO:0008235">
    <property type="term" value="F:metalloexopeptidase activity"/>
    <property type="evidence" value="ECO:0007669"/>
    <property type="project" value="UniProtKB-UniRule"/>
</dbReference>
<dbReference type="GO" id="GO:0016795">
    <property type="term" value="F:phosphoric triester hydrolase activity"/>
    <property type="evidence" value="ECO:0007669"/>
    <property type="project" value="InterPro"/>
</dbReference>
<dbReference type="GO" id="GO:0102009">
    <property type="term" value="F:proline dipeptidase activity"/>
    <property type="evidence" value="ECO:0007669"/>
    <property type="project" value="UniProtKB-EC"/>
</dbReference>
<dbReference type="GO" id="GO:0006508">
    <property type="term" value="P:proteolysis"/>
    <property type="evidence" value="ECO:0007669"/>
    <property type="project" value="UniProtKB-KW"/>
</dbReference>
<dbReference type="CDD" id="cd01087">
    <property type="entry name" value="Prolidase"/>
    <property type="match status" value="1"/>
</dbReference>
<dbReference type="FunFam" id="3.40.350.10:FF:000002">
    <property type="entry name" value="Xaa-Pro dipeptidase"/>
    <property type="match status" value="1"/>
</dbReference>
<dbReference type="FunFam" id="3.90.230.10:FF:000006">
    <property type="entry name" value="Xaa-Pro dipeptidase"/>
    <property type="match status" value="1"/>
</dbReference>
<dbReference type="Gene3D" id="3.90.230.10">
    <property type="entry name" value="Creatinase/methionine aminopeptidase superfamily"/>
    <property type="match status" value="1"/>
</dbReference>
<dbReference type="Gene3D" id="3.40.350.10">
    <property type="entry name" value="Creatinase/prolidase N-terminal domain"/>
    <property type="match status" value="1"/>
</dbReference>
<dbReference type="HAMAP" id="MF_01279">
    <property type="entry name" value="X_Pro_dipeptid"/>
    <property type="match status" value="1"/>
</dbReference>
<dbReference type="InterPro" id="IPR029149">
    <property type="entry name" value="Creatin/AminoP/Spt16_N"/>
</dbReference>
<dbReference type="InterPro" id="IPR036005">
    <property type="entry name" value="Creatinase/aminopeptidase-like"/>
</dbReference>
<dbReference type="InterPro" id="IPR048819">
    <property type="entry name" value="PepQ_N"/>
</dbReference>
<dbReference type="InterPro" id="IPR000994">
    <property type="entry name" value="Pept_M24"/>
</dbReference>
<dbReference type="InterPro" id="IPR001131">
    <property type="entry name" value="Peptidase_M24B_aminopep-P_CS"/>
</dbReference>
<dbReference type="InterPro" id="IPR052433">
    <property type="entry name" value="X-Pro_dipept-like"/>
</dbReference>
<dbReference type="InterPro" id="IPR022846">
    <property type="entry name" value="X_Pro_dipept"/>
</dbReference>
<dbReference type="NCBIfam" id="NF010133">
    <property type="entry name" value="PRK13607.1"/>
    <property type="match status" value="1"/>
</dbReference>
<dbReference type="PANTHER" id="PTHR43226">
    <property type="entry name" value="XAA-PRO AMINOPEPTIDASE 3"/>
    <property type="match status" value="1"/>
</dbReference>
<dbReference type="PANTHER" id="PTHR43226:SF8">
    <property type="entry name" value="XAA-PRO DIPEPTIDASE"/>
    <property type="match status" value="1"/>
</dbReference>
<dbReference type="Pfam" id="PF21216">
    <property type="entry name" value="PepQ_N"/>
    <property type="match status" value="1"/>
</dbReference>
<dbReference type="Pfam" id="PF00557">
    <property type="entry name" value="Peptidase_M24"/>
    <property type="match status" value="1"/>
</dbReference>
<dbReference type="SUPFAM" id="SSF55920">
    <property type="entry name" value="Creatinase/aminopeptidase"/>
    <property type="match status" value="1"/>
</dbReference>
<dbReference type="PROSITE" id="PS00491">
    <property type="entry name" value="PROLINE_PEPTIDASE"/>
    <property type="match status" value="1"/>
</dbReference>
<name>PEPQ_ECO81</name>
<sequence length="443" mass="50217">MESLASLYKNHIATLQERTRDALARFKLDALLIHSGELFNVFLDDHPYPFKVNPQFKAWVPVTQVPNCWLLVDGVNKPKLWFYLPVDYWHNVEPLPNSFWTEDVEVIALPKADGIGSLLPAARGNIGYIGPVPERALQLGIEASNINPKGVIDYLHYYRSFKTEYELACMREAQKMAVNGHRAAEEAFRSGMSEFDINIAYLTATGHRDTDVPYSNIVALNEHAAVLHYTKLDHQAPEEMRSFLLDAGAEYNGYAADLTRTWSAKSDNDYAQLVKDVNDEQLALIATMKAGVSYVDYHIQFHQRIAKLLRKHQIITDMSEEAMVENDLTGPFMPHGIGHPLGLQVHDVAGFMQDDSGTHLAAPARYPYLRCTRILQPGMVLTIEPGIYFIESLLAPWREGQFSKHFNWQKIEALKPFGGIRIEDNVVIHENNVENMTRDLKLA</sequence>
<feature type="chain" id="PRO_1000165227" description="Xaa-Pro dipeptidase">
    <location>
        <begin position="1"/>
        <end position="443"/>
    </location>
</feature>
<feature type="binding site" evidence="1">
    <location>
        <position position="246"/>
    </location>
    <ligand>
        <name>Mn(2+)</name>
        <dbReference type="ChEBI" id="CHEBI:29035"/>
        <label>2</label>
    </ligand>
</feature>
<feature type="binding site" evidence="1">
    <location>
        <position position="257"/>
    </location>
    <ligand>
        <name>Mn(2+)</name>
        <dbReference type="ChEBI" id="CHEBI:29035"/>
        <label>1</label>
    </ligand>
</feature>
<feature type="binding site" evidence="1">
    <location>
        <position position="257"/>
    </location>
    <ligand>
        <name>Mn(2+)</name>
        <dbReference type="ChEBI" id="CHEBI:29035"/>
        <label>2</label>
    </ligand>
</feature>
<feature type="binding site" evidence="1">
    <location>
        <position position="339"/>
    </location>
    <ligand>
        <name>Mn(2+)</name>
        <dbReference type="ChEBI" id="CHEBI:29035"/>
        <label>1</label>
    </ligand>
</feature>
<feature type="binding site" evidence="1">
    <location>
        <position position="384"/>
    </location>
    <ligand>
        <name>Mn(2+)</name>
        <dbReference type="ChEBI" id="CHEBI:29035"/>
        <label>1</label>
    </ligand>
</feature>
<feature type="binding site" evidence="1">
    <location>
        <position position="423"/>
    </location>
    <ligand>
        <name>Mn(2+)</name>
        <dbReference type="ChEBI" id="CHEBI:29035"/>
        <label>1</label>
    </ligand>
</feature>
<feature type="binding site" evidence="1">
    <location>
        <position position="423"/>
    </location>
    <ligand>
        <name>Mn(2+)</name>
        <dbReference type="ChEBI" id="CHEBI:29035"/>
        <label>2</label>
    </ligand>
</feature>
<proteinExistence type="inferred from homology"/>
<reference key="1">
    <citation type="journal article" date="2009" name="PLoS Genet.">
        <title>Organised genome dynamics in the Escherichia coli species results in highly diverse adaptive paths.</title>
        <authorList>
            <person name="Touchon M."/>
            <person name="Hoede C."/>
            <person name="Tenaillon O."/>
            <person name="Barbe V."/>
            <person name="Baeriswyl S."/>
            <person name="Bidet P."/>
            <person name="Bingen E."/>
            <person name="Bonacorsi S."/>
            <person name="Bouchier C."/>
            <person name="Bouvet O."/>
            <person name="Calteau A."/>
            <person name="Chiapello H."/>
            <person name="Clermont O."/>
            <person name="Cruveiller S."/>
            <person name="Danchin A."/>
            <person name="Diard M."/>
            <person name="Dossat C."/>
            <person name="Karoui M.E."/>
            <person name="Frapy E."/>
            <person name="Garry L."/>
            <person name="Ghigo J.M."/>
            <person name="Gilles A.M."/>
            <person name="Johnson J."/>
            <person name="Le Bouguenec C."/>
            <person name="Lescat M."/>
            <person name="Mangenot S."/>
            <person name="Martinez-Jehanne V."/>
            <person name="Matic I."/>
            <person name="Nassif X."/>
            <person name="Oztas S."/>
            <person name="Petit M.A."/>
            <person name="Pichon C."/>
            <person name="Rouy Z."/>
            <person name="Ruf C.S."/>
            <person name="Schneider D."/>
            <person name="Tourret J."/>
            <person name="Vacherie B."/>
            <person name="Vallenet D."/>
            <person name="Medigue C."/>
            <person name="Rocha E.P.C."/>
            <person name="Denamur E."/>
        </authorList>
    </citation>
    <scope>NUCLEOTIDE SEQUENCE [LARGE SCALE GENOMIC DNA]</scope>
    <source>
        <strain>ED1a</strain>
    </source>
</reference>
<comment type="function">
    <text evidence="1">Splits dipeptides with a prolyl residue in the C-terminal position.</text>
</comment>
<comment type="catalytic activity">
    <reaction evidence="1">
        <text>Xaa-L-Pro dipeptide + H2O = an L-alpha-amino acid + L-proline</text>
        <dbReference type="Rhea" id="RHEA:76407"/>
        <dbReference type="ChEBI" id="CHEBI:15377"/>
        <dbReference type="ChEBI" id="CHEBI:59869"/>
        <dbReference type="ChEBI" id="CHEBI:60039"/>
        <dbReference type="ChEBI" id="CHEBI:195196"/>
        <dbReference type="EC" id="3.4.13.9"/>
    </reaction>
</comment>
<comment type="cofactor">
    <cofactor evidence="1">
        <name>Mn(2+)</name>
        <dbReference type="ChEBI" id="CHEBI:29035"/>
    </cofactor>
    <text evidence="1">Binds 2 manganese ions per subunit.</text>
</comment>
<comment type="similarity">
    <text evidence="1">Belongs to the peptidase M24B family. Bacterial-type prolidase subfamily.</text>
</comment>
<keyword id="KW-0224">Dipeptidase</keyword>
<keyword id="KW-0378">Hydrolase</keyword>
<keyword id="KW-0464">Manganese</keyword>
<keyword id="KW-0479">Metal-binding</keyword>
<keyword id="KW-0482">Metalloprotease</keyword>
<keyword id="KW-0645">Protease</keyword>
<organism>
    <name type="scientific">Escherichia coli O81 (strain ED1a)</name>
    <dbReference type="NCBI Taxonomy" id="585397"/>
    <lineage>
        <taxon>Bacteria</taxon>
        <taxon>Pseudomonadati</taxon>
        <taxon>Pseudomonadota</taxon>
        <taxon>Gammaproteobacteria</taxon>
        <taxon>Enterobacterales</taxon>
        <taxon>Enterobacteriaceae</taxon>
        <taxon>Escherichia</taxon>
    </lineage>
</organism>
<evidence type="ECO:0000255" key="1">
    <source>
        <dbReference type="HAMAP-Rule" id="MF_01279"/>
    </source>
</evidence>
<gene>
    <name evidence="1" type="primary">pepQ</name>
    <name type="ordered locus">ECED1_4549</name>
</gene>